<evidence type="ECO:0000250" key="1"/>
<evidence type="ECO:0000250" key="2">
    <source>
        <dbReference type="UniProtKB" id="Q9Y2X3"/>
    </source>
</evidence>
<evidence type="ECO:0000255" key="3">
    <source>
        <dbReference type="PROSITE-ProRule" id="PRU00690"/>
    </source>
</evidence>
<evidence type="ECO:0000256" key="4">
    <source>
        <dbReference type="SAM" id="MobiDB-lite"/>
    </source>
</evidence>
<evidence type="ECO:0000269" key="5">
    <source>
    </source>
</evidence>
<evidence type="ECO:0000305" key="6"/>
<evidence type="ECO:0007744" key="7">
    <source>
    </source>
</evidence>
<evidence type="ECO:0007744" key="8">
    <source>
    </source>
</evidence>
<evidence type="ECO:0007744" key="9">
    <source>
    </source>
</evidence>
<keyword id="KW-1017">Isopeptide bond</keyword>
<keyword id="KW-0539">Nucleus</keyword>
<keyword id="KW-0597">Phosphoprotein</keyword>
<keyword id="KW-1185">Reference proteome</keyword>
<keyword id="KW-0687">Ribonucleoprotein</keyword>
<keyword id="KW-0690">Ribosome biogenesis</keyword>
<keyword id="KW-0832">Ubl conjugation</keyword>
<gene>
    <name type="primary">Nop58</name>
    <name type="synonym">Nol5</name>
</gene>
<sequence length="536" mass="60343">MLVLFETSVGYAIFKVLNEKKLQEVDSLWKEFETPEKANKIVKLKHFEKFQDTAEALAAFTALMEGKINKQLKKVLKKIVKEAHEPLAVADAKLGGVIKEKLNLSCIHSPVVNELMRGIRSQMDGLIPGVEPREMAAMCLGLAHSLSRYRLKFSADKVDTMIVQAISLLDDLDKELNNYIMRCREWYGWHFPELGKIISDNLTYCKCLQKVGDRKNYASASLSEFLSEEVEAEVKAAAEISMGTEVSEEDICNILHLCTQVIEISEYRTQLYEYLQNRMMAIAPNVTVMVGELVGARLIAHAGSLLNLAKHAASTVQILGAEKALFRALKSRRDTPKYGLIYHASLVGQSSPKHKGKISRMLAAKTVLAIRYDAFGEDSSSAMGIENRAKLEARLRILEDRGIRKISGTGKALAKAEKYEHKSEVKTYDPSGDSTLPTCSKKRKIEEVDKEDEITEKKAKKAKIKIKAEVEEEMEEEEAEEEQVVEEEPTVKKKKKKDKKKHIKEEPLSEEEPCTSTAVPSPEKKKKKKKKKDAED</sequence>
<accession>Q6DFW4</accession>
<accession>O70396</accession>
<accession>Q3UYX9</accession>
<accession>Q3UZA3</accession>
<accession>Q8C8Y7</accession>
<name>NOP58_MOUSE</name>
<dbReference type="EMBL" id="AF053232">
    <property type="protein sequence ID" value="AAC08435.1"/>
    <property type="status" value="ALT_FRAME"/>
    <property type="molecule type" value="mRNA"/>
</dbReference>
<dbReference type="EMBL" id="AK044216">
    <property type="protein sequence ID" value="BAC31822.1"/>
    <property type="molecule type" value="mRNA"/>
</dbReference>
<dbReference type="EMBL" id="AK133959">
    <property type="protein sequence ID" value="BAE21954.1"/>
    <property type="molecule type" value="mRNA"/>
</dbReference>
<dbReference type="EMBL" id="AK134286">
    <property type="protein sequence ID" value="BAE22082.1"/>
    <property type="molecule type" value="mRNA"/>
</dbReference>
<dbReference type="EMBL" id="BC076604">
    <property type="protein sequence ID" value="AAH76604.1"/>
    <property type="molecule type" value="mRNA"/>
</dbReference>
<dbReference type="EMBL" id="BC085135">
    <property type="protein sequence ID" value="AAH85135.1"/>
    <property type="molecule type" value="mRNA"/>
</dbReference>
<dbReference type="CCDS" id="CCDS35587.1"/>
<dbReference type="RefSeq" id="NP_061356.2">
    <property type="nucleotide sequence ID" value="NM_018868.3"/>
</dbReference>
<dbReference type="SMR" id="Q6DFW4"/>
<dbReference type="BioGRID" id="207760">
    <property type="interactions" value="31"/>
</dbReference>
<dbReference type="CORUM" id="Q6DFW4"/>
<dbReference type="FunCoup" id="Q6DFW4">
    <property type="interactions" value="3654"/>
</dbReference>
<dbReference type="IntAct" id="Q6DFW4">
    <property type="interactions" value="11"/>
</dbReference>
<dbReference type="MINT" id="Q6DFW4"/>
<dbReference type="STRING" id="10090.ENSMUSP00000140250"/>
<dbReference type="GlyGen" id="Q6DFW4">
    <property type="glycosylation" value="1 site, 1 O-linked glycan (1 site)"/>
</dbReference>
<dbReference type="iPTMnet" id="Q6DFW4"/>
<dbReference type="PhosphoSitePlus" id="Q6DFW4"/>
<dbReference type="SwissPalm" id="Q6DFW4"/>
<dbReference type="jPOST" id="Q6DFW4"/>
<dbReference type="PaxDb" id="10090-ENSMUSP00000140250"/>
<dbReference type="PeptideAtlas" id="Q6DFW4"/>
<dbReference type="ProteomicsDB" id="252922"/>
<dbReference type="Pumba" id="Q6DFW4"/>
<dbReference type="Antibodypedia" id="19944">
    <property type="antibodies" value="153 antibodies from 27 providers"/>
</dbReference>
<dbReference type="DNASU" id="55989"/>
<dbReference type="Ensembl" id="ENSMUST00000191142.7">
    <property type="protein sequence ID" value="ENSMUSP00000140250.2"/>
    <property type="gene ID" value="ENSMUSG00000026020.10"/>
</dbReference>
<dbReference type="GeneID" id="55989"/>
<dbReference type="KEGG" id="mmu:55989"/>
<dbReference type="UCSC" id="uc007bdy.1">
    <property type="organism name" value="mouse"/>
</dbReference>
<dbReference type="AGR" id="MGI:1933184"/>
<dbReference type="CTD" id="51602"/>
<dbReference type="MGI" id="MGI:1933184">
    <property type="gene designation" value="Nop58"/>
</dbReference>
<dbReference type="VEuPathDB" id="HostDB:ENSMUSG00000026020"/>
<dbReference type="eggNOG" id="KOG2572">
    <property type="taxonomic scope" value="Eukaryota"/>
</dbReference>
<dbReference type="GeneTree" id="ENSGT00940000153534"/>
<dbReference type="InParanoid" id="Q6DFW4"/>
<dbReference type="OMA" id="MGMRSNW"/>
<dbReference type="OrthoDB" id="6780543at2759"/>
<dbReference type="PhylomeDB" id="Q6DFW4"/>
<dbReference type="TreeFam" id="TF105688"/>
<dbReference type="Reactome" id="R-MMU-4570464">
    <property type="pathway name" value="SUMOylation of RNA binding proteins"/>
</dbReference>
<dbReference type="Reactome" id="R-MMU-6791226">
    <property type="pathway name" value="Major pathway of rRNA processing in the nucleolus and cytosol"/>
</dbReference>
<dbReference type="BioGRID-ORCS" id="55989">
    <property type="hits" value="31 hits in 79 CRISPR screens"/>
</dbReference>
<dbReference type="ChiTaRS" id="Nop58">
    <property type="organism name" value="mouse"/>
</dbReference>
<dbReference type="PRO" id="PR:Q6DFW4"/>
<dbReference type="Proteomes" id="UP000000589">
    <property type="component" value="Chromosome 1"/>
</dbReference>
<dbReference type="RNAct" id="Q6DFW4">
    <property type="molecule type" value="protein"/>
</dbReference>
<dbReference type="Bgee" id="ENSMUSG00000026020">
    <property type="expression patterns" value="Expressed in embryonic post-anal tail and 137 other cell types or tissues"/>
</dbReference>
<dbReference type="ExpressionAtlas" id="Q6DFW4">
    <property type="expression patterns" value="baseline and differential"/>
</dbReference>
<dbReference type="GO" id="GO:0031428">
    <property type="term" value="C:box C/D methylation guide snoRNP complex"/>
    <property type="evidence" value="ECO:0000250"/>
    <property type="project" value="UniProtKB"/>
</dbReference>
<dbReference type="GO" id="GO:0015030">
    <property type="term" value="C:Cajal body"/>
    <property type="evidence" value="ECO:0007669"/>
    <property type="project" value="Ensembl"/>
</dbReference>
<dbReference type="GO" id="GO:0005829">
    <property type="term" value="C:cytosol"/>
    <property type="evidence" value="ECO:0007669"/>
    <property type="project" value="Ensembl"/>
</dbReference>
<dbReference type="GO" id="GO:0001650">
    <property type="term" value="C:fibrillar center"/>
    <property type="evidence" value="ECO:0007669"/>
    <property type="project" value="Ensembl"/>
</dbReference>
<dbReference type="GO" id="GO:0005730">
    <property type="term" value="C:nucleolus"/>
    <property type="evidence" value="ECO:0000250"/>
    <property type="project" value="UniProtKB"/>
</dbReference>
<dbReference type="GO" id="GO:0070761">
    <property type="term" value="C:pre-snoRNP complex"/>
    <property type="evidence" value="ECO:0007669"/>
    <property type="project" value="Ensembl"/>
</dbReference>
<dbReference type="GO" id="GO:0032040">
    <property type="term" value="C:small-subunit processome"/>
    <property type="evidence" value="ECO:0000250"/>
    <property type="project" value="UniProtKB"/>
</dbReference>
<dbReference type="GO" id="GO:0051117">
    <property type="term" value="F:ATPase binding"/>
    <property type="evidence" value="ECO:0007669"/>
    <property type="project" value="Ensembl"/>
</dbReference>
<dbReference type="GO" id="GO:0030515">
    <property type="term" value="F:snoRNA binding"/>
    <property type="evidence" value="ECO:0007669"/>
    <property type="project" value="Ensembl"/>
</dbReference>
<dbReference type="GO" id="GO:0001094">
    <property type="term" value="F:TFIID-class transcription factor complex binding"/>
    <property type="evidence" value="ECO:0007669"/>
    <property type="project" value="Ensembl"/>
</dbReference>
<dbReference type="GO" id="GO:0042274">
    <property type="term" value="P:ribosomal small subunit biogenesis"/>
    <property type="evidence" value="ECO:0000250"/>
    <property type="project" value="UniProtKB"/>
</dbReference>
<dbReference type="GO" id="GO:0048254">
    <property type="term" value="P:snoRNA localization"/>
    <property type="evidence" value="ECO:0007669"/>
    <property type="project" value="Ensembl"/>
</dbReference>
<dbReference type="FunFam" id="1.10.246.90:FF:000004">
    <property type="entry name" value="Nucleolar protein 58"/>
    <property type="match status" value="1"/>
</dbReference>
<dbReference type="FunFam" id="1.10.287.4070:FF:000001">
    <property type="entry name" value="Probable Nucleolar protein 58"/>
    <property type="match status" value="1"/>
</dbReference>
<dbReference type="Gene3D" id="1.10.287.4070">
    <property type="match status" value="1"/>
</dbReference>
<dbReference type="Gene3D" id="1.10.246.90">
    <property type="entry name" value="Nop domain"/>
    <property type="match status" value="1"/>
</dbReference>
<dbReference type="InterPro" id="IPR045056">
    <property type="entry name" value="Nop56/Nop58"/>
</dbReference>
<dbReference type="InterPro" id="IPR012974">
    <property type="entry name" value="NOP58/56_N"/>
</dbReference>
<dbReference type="InterPro" id="IPR042239">
    <property type="entry name" value="Nop_C"/>
</dbReference>
<dbReference type="InterPro" id="IPR002687">
    <property type="entry name" value="Nop_dom"/>
</dbReference>
<dbReference type="InterPro" id="IPR036070">
    <property type="entry name" value="Nop_dom_sf"/>
</dbReference>
<dbReference type="InterPro" id="IPR012976">
    <property type="entry name" value="NOSIC"/>
</dbReference>
<dbReference type="PANTHER" id="PTHR10894">
    <property type="entry name" value="NUCLEOLAR PROTEIN 5 NUCLEOLAR PROTEIN NOP5 NOP58"/>
    <property type="match status" value="1"/>
</dbReference>
<dbReference type="PANTHER" id="PTHR10894:SF1">
    <property type="entry name" value="NUCLEOLAR PROTEIN 58"/>
    <property type="match status" value="1"/>
</dbReference>
<dbReference type="Pfam" id="PF01798">
    <property type="entry name" value="Nop"/>
    <property type="match status" value="1"/>
</dbReference>
<dbReference type="Pfam" id="PF08156">
    <property type="entry name" value="NOP5NT"/>
    <property type="match status" value="1"/>
</dbReference>
<dbReference type="SMART" id="SM00931">
    <property type="entry name" value="NOSIC"/>
    <property type="match status" value="1"/>
</dbReference>
<dbReference type="SUPFAM" id="SSF89124">
    <property type="entry name" value="Nop domain"/>
    <property type="match status" value="1"/>
</dbReference>
<dbReference type="PROSITE" id="PS51358">
    <property type="entry name" value="NOP"/>
    <property type="match status" value="1"/>
</dbReference>
<protein>
    <recommendedName>
        <fullName>Nucleolar protein 58</fullName>
    </recommendedName>
    <alternativeName>
        <fullName>MSSP</fullName>
    </alternativeName>
    <alternativeName>
        <fullName>Nucleolar protein 5</fullName>
    </alternativeName>
    <alternativeName>
        <fullName>SIK-similar protein</fullName>
    </alternativeName>
</protein>
<organism>
    <name type="scientific">Mus musculus</name>
    <name type="common">Mouse</name>
    <dbReference type="NCBI Taxonomy" id="10090"/>
    <lineage>
        <taxon>Eukaryota</taxon>
        <taxon>Metazoa</taxon>
        <taxon>Chordata</taxon>
        <taxon>Craniata</taxon>
        <taxon>Vertebrata</taxon>
        <taxon>Euteleostomi</taxon>
        <taxon>Mammalia</taxon>
        <taxon>Eutheria</taxon>
        <taxon>Euarchontoglires</taxon>
        <taxon>Glires</taxon>
        <taxon>Rodentia</taxon>
        <taxon>Myomorpha</taxon>
        <taxon>Muroidea</taxon>
        <taxon>Muridae</taxon>
        <taxon>Murinae</taxon>
        <taxon>Mus</taxon>
        <taxon>Mus</taxon>
    </lineage>
</organism>
<comment type="function">
    <text evidence="2">Required for the biogenesis of box C/D snoRNAs such as U3, U8 and U14 snoRNAs. Part of the small subunit (SSU) processome, first precursor of the small eukaryotic ribosomal subunit. During the assembly of the SSU processome in the nucleolus, many ribosome biogenesis factors, an RNA chaperone and ribosomal proteins associate with the nascent pre-rRNA and work in concert to generate RNA folding, modifications, rearrangements and cleavage as well as targeted degradation of pre-ribosomal RNA by the RNA exosome. Core component of box C/D small nucleolar ribonucleoprotein (snoRNP) complexes that function in methylation of multiple sites on ribosomal RNAs (rRNAs) and messenger RNAs (mRNAs).</text>
</comment>
<comment type="subunit">
    <text evidence="2 5">Core component of box C/D small nucleolar ribonucleoprotein (snoRNP) particles; the core proteins SNU13, NOP56, NOP58 and FBL or FBLL1 assemble stepwise onto the snoRNA (PubMed:10864044). Interacts with NOLC1/Nopp140. Interacts with NOPCHAP1, NUFIP1, RUVBL1 and RUVBL2; NOPCHAP1 bridges the association of NOP58 with RUVBL1:RUVBL2 and NUFIP1. Interacts with PIH1D1. Part of the small subunit (SSU) processome, composed of more than 70 proteins and the RNA chaperone small nucleolar RNA (snoRNA) U3 (By similarity).</text>
</comment>
<comment type="subcellular location">
    <subcellularLocation>
        <location evidence="2">Nucleus</location>
        <location evidence="2">Nucleolus</location>
    </subcellularLocation>
    <subcellularLocation>
        <location evidence="2">Nucleus</location>
        <location evidence="2">Nucleoplasm</location>
    </subcellularLocation>
    <text evidence="2">Localizes to the nucleolus with a minor part present in the nucleoplasm.</text>
</comment>
<comment type="PTM">
    <text evidence="2">Sumoylation is essential for high-affinity binding to snoRNAs.</text>
</comment>
<comment type="similarity">
    <text evidence="6">Belongs to the NOP5/NOP56 family.</text>
</comment>
<comment type="sequence caution" evidence="6">
    <conflict type="frameshift">
        <sequence resource="EMBL-CDS" id="AAC08435"/>
    </conflict>
</comment>
<feature type="chain" id="PRO_0000287350" description="Nucleolar protein 58">
    <location>
        <begin position="1"/>
        <end position="536"/>
    </location>
</feature>
<feature type="domain" description="Nop" evidence="3">
    <location>
        <begin position="282"/>
        <end position="400"/>
    </location>
</feature>
<feature type="region of interest" description="Disordered" evidence="4">
    <location>
        <begin position="414"/>
        <end position="440"/>
    </location>
</feature>
<feature type="region of interest" description="Disordered" evidence="4">
    <location>
        <begin position="470"/>
        <end position="536"/>
    </location>
</feature>
<feature type="compositionally biased region" description="Basic and acidic residues" evidence="4">
    <location>
        <begin position="414"/>
        <end position="427"/>
    </location>
</feature>
<feature type="compositionally biased region" description="Acidic residues" evidence="4">
    <location>
        <begin position="470"/>
        <end position="488"/>
    </location>
</feature>
<feature type="compositionally biased region" description="Basic residues" evidence="4">
    <location>
        <begin position="492"/>
        <end position="502"/>
    </location>
</feature>
<feature type="compositionally biased region" description="Basic residues" evidence="4">
    <location>
        <begin position="524"/>
        <end position="536"/>
    </location>
</feature>
<feature type="modified residue" description="Phosphothreonine" evidence="2">
    <location>
        <position position="34"/>
    </location>
</feature>
<feature type="modified residue" description="Phosphoserine" evidence="2">
    <location>
        <position position="109"/>
    </location>
</feature>
<feature type="modified residue" description="Phosphoserine" evidence="2">
    <location>
        <position position="304"/>
    </location>
</feature>
<feature type="modified residue" description="Phosphoserine" evidence="2">
    <location>
        <position position="351"/>
    </location>
</feature>
<feature type="modified residue" description="Phosphoserine" evidence="7 8 9">
    <location>
        <position position="509"/>
    </location>
</feature>
<feature type="modified residue" description="Phosphoserine" evidence="7 8 9">
    <location>
        <position position="521"/>
    </location>
</feature>
<feature type="cross-link" description="Glycyl lysine isopeptide (Lys-Gly) (interchain with G-Cter in SUMO2)" evidence="2">
    <location>
        <position position="157"/>
    </location>
</feature>
<feature type="cross-link" description="Glycyl lysine isopeptide (Lys-Gly) (interchain with G-Cter in SUMO2)" evidence="2">
    <location>
        <position position="353"/>
    </location>
</feature>
<feature type="cross-link" description="Glycyl lysine isopeptide (Lys-Gly) (interchain with G-Cter in SUMO2)" evidence="2">
    <location>
        <position position="411"/>
    </location>
</feature>
<feature type="cross-link" description="Glycyl lysine isopeptide (Lys-Gly) (interchain with G-Cter in SUMO2)" evidence="2">
    <location>
        <position position="415"/>
    </location>
</feature>
<feature type="cross-link" description="Glycyl lysine isopeptide (Lys-Gly) (interchain with G-Cter in SUMO2)" evidence="2">
    <location>
        <position position="422"/>
    </location>
</feature>
<feature type="cross-link" description="Glycyl lysine isopeptide (Lys-Gly) (interchain with G-Cter in SUMO2)" evidence="2">
    <location>
        <position position="426"/>
    </location>
</feature>
<feature type="cross-link" description="Glycyl lysine isopeptide (Lys-Gly) (interchain with G-Cter in SUMO2)" evidence="2">
    <location>
        <position position="441"/>
    </location>
</feature>
<feature type="cross-link" description="Glycyl lysine isopeptide (Lys-Gly) (interchain with G-Cter in SUMO2)" evidence="2">
    <location>
        <position position="444"/>
    </location>
</feature>
<feature type="cross-link" description="Glycyl lysine isopeptide (Lys-Gly) (interchain with G-Cter in SUMO2)" evidence="2">
    <location>
        <position position="465"/>
    </location>
</feature>
<feature type="cross-link" description="Glycyl lysine isopeptide (Lys-Gly) (interchain with G-Cter in SUMO); alternate" evidence="1">
    <location>
        <position position="467"/>
    </location>
</feature>
<feature type="cross-link" description="Glycyl lysine isopeptide (Lys-Gly) (interchain with G-Cter in SUMO1); alternate" evidence="2">
    <location>
        <position position="467"/>
    </location>
</feature>
<feature type="cross-link" description="Glycyl lysine isopeptide (Lys-Gly) (interchain with G-Cter in SUMO2); alternate" evidence="2">
    <location>
        <position position="467"/>
    </location>
</feature>
<feature type="cross-link" description="Glycyl lysine isopeptide (Lys-Gly) (interchain with G-Cter in SUMO2)" evidence="2">
    <location>
        <position position="492"/>
    </location>
</feature>
<feature type="cross-link" description="Glycyl lysine isopeptide (Lys-Gly) (interchain with G-Cter in SUMO); alternate" evidence="1">
    <location>
        <position position="504"/>
    </location>
</feature>
<feature type="cross-link" description="Glycyl lysine isopeptide (Lys-Gly) (interchain with G-Cter in SUMO2); alternate" evidence="2">
    <location>
        <position position="504"/>
    </location>
</feature>
<feature type="sequence conflict" description="In Ref. 1; AAC08435." evidence="6" ref="1">
    <original>K</original>
    <variation>R</variation>
    <location>
        <position position="78"/>
    </location>
</feature>
<feature type="sequence conflict" description="In Ref. 2; BAC31822." evidence="6" ref="2">
    <original>I</original>
    <variation>V</variation>
    <location>
        <position position="385"/>
    </location>
</feature>
<feature type="sequence conflict" description="In Ref. 2; BAE22082." evidence="6" ref="2">
    <original>K</original>
    <variation>P</variation>
    <location>
        <position position="499"/>
    </location>
</feature>
<proteinExistence type="evidence at protein level"/>
<reference key="1">
    <citation type="submission" date="1998-03" db="EMBL/GenBank/DDBJ databases">
        <title>cDNA for mouse SIK similar protein (MSSP).</title>
        <authorList>
            <person name="Zierke M."/>
            <person name="Martin M.U."/>
        </authorList>
    </citation>
    <scope>NUCLEOTIDE SEQUENCE [MRNA]</scope>
    <source>
        <strain>C3H/HeJ</strain>
    </source>
</reference>
<reference key="2">
    <citation type="journal article" date="2005" name="Science">
        <title>The transcriptional landscape of the mammalian genome.</title>
        <authorList>
            <person name="Carninci P."/>
            <person name="Kasukawa T."/>
            <person name="Katayama S."/>
            <person name="Gough J."/>
            <person name="Frith M.C."/>
            <person name="Maeda N."/>
            <person name="Oyama R."/>
            <person name="Ravasi T."/>
            <person name="Lenhard B."/>
            <person name="Wells C."/>
            <person name="Kodzius R."/>
            <person name="Shimokawa K."/>
            <person name="Bajic V.B."/>
            <person name="Brenner S.E."/>
            <person name="Batalov S."/>
            <person name="Forrest A.R."/>
            <person name="Zavolan M."/>
            <person name="Davis M.J."/>
            <person name="Wilming L.G."/>
            <person name="Aidinis V."/>
            <person name="Allen J.E."/>
            <person name="Ambesi-Impiombato A."/>
            <person name="Apweiler R."/>
            <person name="Aturaliya R.N."/>
            <person name="Bailey T.L."/>
            <person name="Bansal M."/>
            <person name="Baxter L."/>
            <person name="Beisel K.W."/>
            <person name="Bersano T."/>
            <person name="Bono H."/>
            <person name="Chalk A.M."/>
            <person name="Chiu K.P."/>
            <person name="Choudhary V."/>
            <person name="Christoffels A."/>
            <person name="Clutterbuck D.R."/>
            <person name="Crowe M.L."/>
            <person name="Dalla E."/>
            <person name="Dalrymple B.P."/>
            <person name="de Bono B."/>
            <person name="Della Gatta G."/>
            <person name="di Bernardo D."/>
            <person name="Down T."/>
            <person name="Engstrom P."/>
            <person name="Fagiolini M."/>
            <person name="Faulkner G."/>
            <person name="Fletcher C.F."/>
            <person name="Fukushima T."/>
            <person name="Furuno M."/>
            <person name="Futaki S."/>
            <person name="Gariboldi M."/>
            <person name="Georgii-Hemming P."/>
            <person name="Gingeras T.R."/>
            <person name="Gojobori T."/>
            <person name="Green R.E."/>
            <person name="Gustincich S."/>
            <person name="Harbers M."/>
            <person name="Hayashi Y."/>
            <person name="Hensch T.K."/>
            <person name="Hirokawa N."/>
            <person name="Hill D."/>
            <person name="Huminiecki L."/>
            <person name="Iacono M."/>
            <person name="Ikeo K."/>
            <person name="Iwama A."/>
            <person name="Ishikawa T."/>
            <person name="Jakt M."/>
            <person name="Kanapin A."/>
            <person name="Katoh M."/>
            <person name="Kawasawa Y."/>
            <person name="Kelso J."/>
            <person name="Kitamura H."/>
            <person name="Kitano H."/>
            <person name="Kollias G."/>
            <person name="Krishnan S.P."/>
            <person name="Kruger A."/>
            <person name="Kummerfeld S.K."/>
            <person name="Kurochkin I.V."/>
            <person name="Lareau L.F."/>
            <person name="Lazarevic D."/>
            <person name="Lipovich L."/>
            <person name="Liu J."/>
            <person name="Liuni S."/>
            <person name="McWilliam S."/>
            <person name="Madan Babu M."/>
            <person name="Madera M."/>
            <person name="Marchionni L."/>
            <person name="Matsuda H."/>
            <person name="Matsuzawa S."/>
            <person name="Miki H."/>
            <person name="Mignone F."/>
            <person name="Miyake S."/>
            <person name="Morris K."/>
            <person name="Mottagui-Tabar S."/>
            <person name="Mulder N."/>
            <person name="Nakano N."/>
            <person name="Nakauchi H."/>
            <person name="Ng P."/>
            <person name="Nilsson R."/>
            <person name="Nishiguchi S."/>
            <person name="Nishikawa S."/>
            <person name="Nori F."/>
            <person name="Ohara O."/>
            <person name="Okazaki Y."/>
            <person name="Orlando V."/>
            <person name="Pang K.C."/>
            <person name="Pavan W.J."/>
            <person name="Pavesi G."/>
            <person name="Pesole G."/>
            <person name="Petrovsky N."/>
            <person name="Piazza S."/>
            <person name="Reed J."/>
            <person name="Reid J.F."/>
            <person name="Ring B.Z."/>
            <person name="Ringwald M."/>
            <person name="Rost B."/>
            <person name="Ruan Y."/>
            <person name="Salzberg S.L."/>
            <person name="Sandelin A."/>
            <person name="Schneider C."/>
            <person name="Schoenbach C."/>
            <person name="Sekiguchi K."/>
            <person name="Semple C.A."/>
            <person name="Seno S."/>
            <person name="Sessa L."/>
            <person name="Sheng Y."/>
            <person name="Shibata Y."/>
            <person name="Shimada H."/>
            <person name="Shimada K."/>
            <person name="Silva D."/>
            <person name="Sinclair B."/>
            <person name="Sperling S."/>
            <person name="Stupka E."/>
            <person name="Sugiura K."/>
            <person name="Sultana R."/>
            <person name="Takenaka Y."/>
            <person name="Taki K."/>
            <person name="Tammoja K."/>
            <person name="Tan S.L."/>
            <person name="Tang S."/>
            <person name="Taylor M.S."/>
            <person name="Tegner J."/>
            <person name="Teichmann S.A."/>
            <person name="Ueda H.R."/>
            <person name="van Nimwegen E."/>
            <person name="Verardo R."/>
            <person name="Wei C.L."/>
            <person name="Yagi K."/>
            <person name="Yamanishi H."/>
            <person name="Zabarovsky E."/>
            <person name="Zhu S."/>
            <person name="Zimmer A."/>
            <person name="Hide W."/>
            <person name="Bult C."/>
            <person name="Grimmond S.M."/>
            <person name="Teasdale R.D."/>
            <person name="Liu E.T."/>
            <person name="Brusic V."/>
            <person name="Quackenbush J."/>
            <person name="Wahlestedt C."/>
            <person name="Mattick J.S."/>
            <person name="Hume D.A."/>
            <person name="Kai C."/>
            <person name="Sasaki D."/>
            <person name="Tomaru Y."/>
            <person name="Fukuda S."/>
            <person name="Kanamori-Katayama M."/>
            <person name="Suzuki M."/>
            <person name="Aoki J."/>
            <person name="Arakawa T."/>
            <person name="Iida J."/>
            <person name="Imamura K."/>
            <person name="Itoh M."/>
            <person name="Kato T."/>
            <person name="Kawaji H."/>
            <person name="Kawagashira N."/>
            <person name="Kawashima T."/>
            <person name="Kojima M."/>
            <person name="Kondo S."/>
            <person name="Konno H."/>
            <person name="Nakano K."/>
            <person name="Ninomiya N."/>
            <person name="Nishio T."/>
            <person name="Okada M."/>
            <person name="Plessy C."/>
            <person name="Shibata K."/>
            <person name="Shiraki T."/>
            <person name="Suzuki S."/>
            <person name="Tagami M."/>
            <person name="Waki K."/>
            <person name="Watahiki A."/>
            <person name="Okamura-Oho Y."/>
            <person name="Suzuki H."/>
            <person name="Kawai J."/>
            <person name="Hayashizaki Y."/>
        </authorList>
    </citation>
    <scope>NUCLEOTIDE SEQUENCE [LARGE SCALE MRNA]</scope>
    <source>
        <strain>C57BL/6J</strain>
        <tissue>Embryo</tissue>
        <tissue>Forelimb</tissue>
        <tissue>Retina</tissue>
    </source>
</reference>
<reference key="3">
    <citation type="journal article" date="2004" name="Genome Res.">
        <title>The status, quality, and expansion of the NIH full-length cDNA project: the Mammalian Gene Collection (MGC).</title>
        <authorList>
            <consortium name="The MGC Project Team"/>
        </authorList>
    </citation>
    <scope>NUCLEOTIDE SEQUENCE [LARGE SCALE MRNA]</scope>
    <source>
        <strain>C57BL/6J</strain>
        <tissue>Brain</tissue>
    </source>
</reference>
<reference key="4">
    <citation type="journal article" date="2000" name="RNA">
        <title>Box C/D snoRNA-associated proteins: two pairs of evolutionarily ancient proteins and possible links to replication and transcription.</title>
        <authorList>
            <person name="Newman D.R."/>
            <person name="Kuhn J.F."/>
            <person name="Shanab G.M."/>
            <person name="Maxwell E.S."/>
        </authorList>
    </citation>
    <scope>ASSOCIATION WITH U14 BOX C/D SNORNPA</scope>
</reference>
<reference key="5">
    <citation type="journal article" date="2007" name="Proc. Natl. Acad. Sci. U.S.A.">
        <title>Large-scale phosphorylation analysis of mouse liver.</title>
        <authorList>
            <person name="Villen J."/>
            <person name="Beausoleil S.A."/>
            <person name="Gerber S.A."/>
            <person name="Gygi S.P."/>
        </authorList>
    </citation>
    <scope>PHOSPHORYLATION [LARGE SCALE ANALYSIS] AT SER-509 AND SER-521</scope>
    <scope>IDENTIFICATION BY MASS SPECTROMETRY [LARGE SCALE ANALYSIS]</scope>
    <source>
        <tissue>Liver</tissue>
    </source>
</reference>
<reference key="6">
    <citation type="journal article" date="2009" name="Immunity">
        <title>The phagosomal proteome in interferon-gamma-activated macrophages.</title>
        <authorList>
            <person name="Trost M."/>
            <person name="English L."/>
            <person name="Lemieux S."/>
            <person name="Courcelles M."/>
            <person name="Desjardins M."/>
            <person name="Thibault P."/>
        </authorList>
    </citation>
    <scope>PHOSPHORYLATION [LARGE SCALE ANALYSIS] AT SER-509 AND SER-521</scope>
    <scope>IDENTIFICATION BY MASS SPECTROMETRY [LARGE SCALE ANALYSIS]</scope>
</reference>
<reference key="7">
    <citation type="journal article" date="2009" name="Mol. Cell. Proteomics">
        <title>Large scale localization of protein phosphorylation by use of electron capture dissociation mass spectrometry.</title>
        <authorList>
            <person name="Sweet S.M."/>
            <person name="Bailey C.M."/>
            <person name="Cunningham D.L."/>
            <person name="Heath J.K."/>
            <person name="Cooper H.J."/>
        </authorList>
    </citation>
    <scope>IDENTIFICATION BY MASS SPECTROMETRY [LARGE SCALE ANALYSIS]</scope>
    <source>
        <tissue>Embryonic fibroblast</tissue>
    </source>
</reference>
<reference key="8">
    <citation type="journal article" date="2010" name="Cell">
        <title>A tissue-specific atlas of mouse protein phosphorylation and expression.</title>
        <authorList>
            <person name="Huttlin E.L."/>
            <person name="Jedrychowski M.P."/>
            <person name="Elias J.E."/>
            <person name="Goswami T."/>
            <person name="Rad R."/>
            <person name="Beausoleil S.A."/>
            <person name="Villen J."/>
            <person name="Haas W."/>
            <person name="Sowa M.E."/>
            <person name="Gygi S.P."/>
        </authorList>
    </citation>
    <scope>PHOSPHORYLATION [LARGE SCALE ANALYSIS] AT SER-509 AND SER-521</scope>
    <scope>IDENTIFICATION BY MASS SPECTROMETRY [LARGE SCALE ANALYSIS]</scope>
    <source>
        <tissue>Brain</tissue>
        <tissue>Brown adipose tissue</tissue>
        <tissue>Heart</tissue>
        <tissue>Kidney</tissue>
        <tissue>Liver</tissue>
        <tissue>Lung</tissue>
        <tissue>Pancreas</tissue>
        <tissue>Spleen</tissue>
        <tissue>Testis</tissue>
    </source>
</reference>